<feature type="chain" id="PRO_0000101570" description="Ribosomal RNA small subunit methyltransferase A">
    <location>
        <begin position="1"/>
        <end position="259"/>
    </location>
</feature>
<feature type="binding site" evidence="1">
    <location>
        <position position="13"/>
    </location>
    <ligand>
        <name>S-adenosyl-L-methionine</name>
        <dbReference type="ChEBI" id="CHEBI:59789"/>
    </ligand>
</feature>
<feature type="binding site" evidence="1">
    <location>
        <position position="15"/>
    </location>
    <ligand>
        <name>S-adenosyl-L-methionine</name>
        <dbReference type="ChEBI" id="CHEBI:59789"/>
    </ligand>
</feature>
<feature type="binding site" evidence="1">
    <location>
        <position position="40"/>
    </location>
    <ligand>
        <name>S-adenosyl-L-methionine</name>
        <dbReference type="ChEBI" id="CHEBI:59789"/>
    </ligand>
</feature>
<feature type="binding site" evidence="1">
    <location>
        <position position="61"/>
    </location>
    <ligand>
        <name>S-adenosyl-L-methionine</name>
        <dbReference type="ChEBI" id="CHEBI:59789"/>
    </ligand>
</feature>
<feature type="binding site" evidence="1">
    <location>
        <position position="85"/>
    </location>
    <ligand>
        <name>S-adenosyl-L-methionine</name>
        <dbReference type="ChEBI" id="CHEBI:59789"/>
    </ligand>
</feature>
<feature type="binding site" evidence="1">
    <location>
        <position position="103"/>
    </location>
    <ligand>
        <name>S-adenosyl-L-methionine</name>
        <dbReference type="ChEBI" id="CHEBI:59789"/>
    </ligand>
</feature>
<dbReference type="EC" id="2.1.1.182" evidence="1"/>
<dbReference type="EMBL" id="AE004969">
    <property type="protein sequence ID" value="AAW89023.1"/>
    <property type="molecule type" value="Genomic_DNA"/>
</dbReference>
<dbReference type="RefSeq" id="WP_003706653.1">
    <property type="nucleotide sequence ID" value="NC_002946.2"/>
</dbReference>
<dbReference type="RefSeq" id="YP_207435.1">
    <property type="nucleotide sequence ID" value="NC_002946.2"/>
</dbReference>
<dbReference type="SMR" id="Q5F9W4"/>
<dbReference type="STRING" id="242231.NGO_0272"/>
<dbReference type="KEGG" id="ngo:NGO_0272"/>
<dbReference type="PATRIC" id="fig|242231.10.peg.337"/>
<dbReference type="HOGENOM" id="CLU_041220_0_1_4"/>
<dbReference type="Proteomes" id="UP000000535">
    <property type="component" value="Chromosome"/>
</dbReference>
<dbReference type="GO" id="GO:0005829">
    <property type="term" value="C:cytosol"/>
    <property type="evidence" value="ECO:0007669"/>
    <property type="project" value="TreeGrafter"/>
</dbReference>
<dbReference type="GO" id="GO:0052908">
    <property type="term" value="F:16S rRNA (adenine(1518)-N(6)/adenine(1519)-N(6))-dimethyltransferase activity"/>
    <property type="evidence" value="ECO:0007669"/>
    <property type="project" value="UniProtKB-EC"/>
</dbReference>
<dbReference type="GO" id="GO:0003723">
    <property type="term" value="F:RNA binding"/>
    <property type="evidence" value="ECO:0007669"/>
    <property type="project" value="UniProtKB-KW"/>
</dbReference>
<dbReference type="FunFam" id="1.10.8.100:FF:000001">
    <property type="entry name" value="Ribosomal RNA small subunit methyltransferase A"/>
    <property type="match status" value="1"/>
</dbReference>
<dbReference type="FunFam" id="3.40.50.150:FF:000006">
    <property type="entry name" value="Ribosomal RNA small subunit methyltransferase A"/>
    <property type="match status" value="1"/>
</dbReference>
<dbReference type="Gene3D" id="1.10.8.100">
    <property type="entry name" value="Ribosomal RNA adenine dimethylase-like, domain 2"/>
    <property type="match status" value="1"/>
</dbReference>
<dbReference type="Gene3D" id="3.40.50.150">
    <property type="entry name" value="Vaccinia Virus protein VP39"/>
    <property type="match status" value="1"/>
</dbReference>
<dbReference type="HAMAP" id="MF_00607">
    <property type="entry name" value="16SrRNA_methyltr_A"/>
    <property type="match status" value="1"/>
</dbReference>
<dbReference type="InterPro" id="IPR001737">
    <property type="entry name" value="KsgA/Erm"/>
</dbReference>
<dbReference type="InterPro" id="IPR023165">
    <property type="entry name" value="rRNA_Ade_diMease-like_C"/>
</dbReference>
<dbReference type="InterPro" id="IPR020596">
    <property type="entry name" value="rRNA_Ade_Mease_Trfase_CS"/>
</dbReference>
<dbReference type="InterPro" id="IPR020598">
    <property type="entry name" value="rRNA_Ade_methylase_Trfase_N"/>
</dbReference>
<dbReference type="InterPro" id="IPR011530">
    <property type="entry name" value="rRNA_adenine_dimethylase"/>
</dbReference>
<dbReference type="InterPro" id="IPR029063">
    <property type="entry name" value="SAM-dependent_MTases_sf"/>
</dbReference>
<dbReference type="NCBIfam" id="TIGR00755">
    <property type="entry name" value="ksgA"/>
    <property type="match status" value="1"/>
</dbReference>
<dbReference type="PANTHER" id="PTHR11727">
    <property type="entry name" value="DIMETHYLADENOSINE TRANSFERASE"/>
    <property type="match status" value="1"/>
</dbReference>
<dbReference type="PANTHER" id="PTHR11727:SF7">
    <property type="entry name" value="DIMETHYLADENOSINE TRANSFERASE-RELATED"/>
    <property type="match status" value="1"/>
</dbReference>
<dbReference type="Pfam" id="PF00398">
    <property type="entry name" value="RrnaAD"/>
    <property type="match status" value="1"/>
</dbReference>
<dbReference type="SMART" id="SM00650">
    <property type="entry name" value="rADc"/>
    <property type="match status" value="1"/>
</dbReference>
<dbReference type="SUPFAM" id="SSF53335">
    <property type="entry name" value="S-adenosyl-L-methionine-dependent methyltransferases"/>
    <property type="match status" value="1"/>
</dbReference>
<dbReference type="PROSITE" id="PS01131">
    <property type="entry name" value="RRNA_A_DIMETH"/>
    <property type="match status" value="1"/>
</dbReference>
<dbReference type="PROSITE" id="PS51689">
    <property type="entry name" value="SAM_RNA_A_N6_MT"/>
    <property type="match status" value="1"/>
</dbReference>
<comment type="function">
    <text evidence="1">Specifically dimethylates two adjacent adenosines (A1518 and A1519) in the loop of a conserved hairpin near the 3'-end of 16S rRNA in the 30S particle. May play a critical role in biogenesis of 30S subunits.</text>
</comment>
<comment type="catalytic activity">
    <reaction evidence="1">
        <text>adenosine(1518)/adenosine(1519) in 16S rRNA + 4 S-adenosyl-L-methionine = N(6)-dimethyladenosine(1518)/N(6)-dimethyladenosine(1519) in 16S rRNA + 4 S-adenosyl-L-homocysteine + 4 H(+)</text>
        <dbReference type="Rhea" id="RHEA:19609"/>
        <dbReference type="Rhea" id="RHEA-COMP:10232"/>
        <dbReference type="Rhea" id="RHEA-COMP:10233"/>
        <dbReference type="ChEBI" id="CHEBI:15378"/>
        <dbReference type="ChEBI" id="CHEBI:57856"/>
        <dbReference type="ChEBI" id="CHEBI:59789"/>
        <dbReference type="ChEBI" id="CHEBI:74411"/>
        <dbReference type="ChEBI" id="CHEBI:74493"/>
        <dbReference type="EC" id="2.1.1.182"/>
    </reaction>
</comment>
<comment type="subcellular location">
    <subcellularLocation>
        <location evidence="1">Cytoplasm</location>
    </subcellularLocation>
</comment>
<comment type="similarity">
    <text evidence="1">Belongs to the class I-like SAM-binding methyltransferase superfamily. rRNA adenine N(6)-methyltransferase family. RsmA subfamily.</text>
</comment>
<gene>
    <name evidence="1" type="primary">rsmA</name>
    <name evidence="1" type="synonym">ksgA</name>
    <name type="ordered locus">NGO_0272</name>
</gene>
<name>RSMA_NEIG1</name>
<protein>
    <recommendedName>
        <fullName evidence="1">Ribosomal RNA small subunit methyltransferase A</fullName>
        <ecNumber evidence="1">2.1.1.182</ecNumber>
    </recommendedName>
    <alternativeName>
        <fullName evidence="1">16S rRNA (adenine(1518)-N(6)/adenine(1519)-N(6))-dimethyltransferase</fullName>
    </alternativeName>
    <alternativeName>
        <fullName evidence="1">16S rRNA dimethyladenosine transferase</fullName>
    </alternativeName>
    <alternativeName>
        <fullName evidence="1">16S rRNA dimethylase</fullName>
    </alternativeName>
    <alternativeName>
        <fullName evidence="1">S-adenosylmethionine-6-N', N'-adenosyl(rRNA) dimethyltransferase</fullName>
    </alternativeName>
</protein>
<organism>
    <name type="scientific">Neisseria gonorrhoeae (strain ATCC 700825 / FA 1090)</name>
    <dbReference type="NCBI Taxonomy" id="242231"/>
    <lineage>
        <taxon>Bacteria</taxon>
        <taxon>Pseudomonadati</taxon>
        <taxon>Pseudomonadota</taxon>
        <taxon>Betaproteobacteria</taxon>
        <taxon>Neisseriales</taxon>
        <taxon>Neisseriaceae</taxon>
        <taxon>Neisseria</taxon>
    </lineage>
</organism>
<keyword id="KW-0963">Cytoplasm</keyword>
<keyword id="KW-0489">Methyltransferase</keyword>
<keyword id="KW-1185">Reference proteome</keyword>
<keyword id="KW-0694">RNA-binding</keyword>
<keyword id="KW-0698">rRNA processing</keyword>
<keyword id="KW-0949">S-adenosyl-L-methionine</keyword>
<keyword id="KW-0808">Transferase</keyword>
<sequence length="259" mass="29236">MKEHKARKRFGQNFLQDTRIIGDIVNAVRPQADDVVIEIGPGLAAITEPLAKKLNRLHVVEIDRDIVCRLKTLPFADKLVIHEGDVLQFDFNGISGKKKIVGNLPYNISTPLLFKLAEVADDVADMHFMLQKEVVERMVAAPKSNDYGRLGVMLQYFFDMELLIDVPPESFDPAPKIDSAVVRMIPVKHRIGKADDFDHFAKLVKLAFRQRRKTIRNNLKELADDDDLQAVGISPQDRAEHIAPEKYVALSNYLADKAV</sequence>
<proteinExistence type="inferred from homology"/>
<accession>Q5F9W4</accession>
<reference key="1">
    <citation type="submission" date="2003-03" db="EMBL/GenBank/DDBJ databases">
        <title>The complete genome sequence of Neisseria gonorrhoeae.</title>
        <authorList>
            <person name="Lewis L.A."/>
            <person name="Gillaspy A.F."/>
            <person name="McLaughlin R.E."/>
            <person name="Gipson M."/>
            <person name="Ducey T.F."/>
            <person name="Ownbey T."/>
            <person name="Hartman K."/>
            <person name="Nydick C."/>
            <person name="Carson M.B."/>
            <person name="Vaughn J."/>
            <person name="Thomson C."/>
            <person name="Song L."/>
            <person name="Lin S."/>
            <person name="Yuan X."/>
            <person name="Najar F."/>
            <person name="Zhan M."/>
            <person name="Ren Q."/>
            <person name="Zhu H."/>
            <person name="Qi S."/>
            <person name="Kenton S.M."/>
            <person name="Lai H."/>
            <person name="White J.D."/>
            <person name="Clifton S."/>
            <person name="Roe B.A."/>
            <person name="Dyer D.W."/>
        </authorList>
    </citation>
    <scope>NUCLEOTIDE SEQUENCE [LARGE SCALE GENOMIC DNA]</scope>
    <source>
        <strain>ATCC 700825 / FA 1090</strain>
    </source>
</reference>
<evidence type="ECO:0000255" key="1">
    <source>
        <dbReference type="HAMAP-Rule" id="MF_00607"/>
    </source>
</evidence>